<accession>P0AFA0</accession>
<accession>P39340</accession>
<organism>
    <name type="scientific">Escherichia coli O157:H7</name>
    <dbReference type="NCBI Taxonomy" id="83334"/>
    <lineage>
        <taxon>Bacteria</taxon>
        <taxon>Pseudomonadati</taxon>
        <taxon>Pseudomonadota</taxon>
        <taxon>Gammaproteobacteria</taxon>
        <taxon>Enterobacterales</taxon>
        <taxon>Enterobacteriaceae</taxon>
        <taxon>Escherichia</taxon>
    </lineage>
</organism>
<sequence>MIIIRYLVRETLKSQLAILFILLLIFFCQKLVRILGAAVDGDIPANLVLSLLGLGVPEMAQLILPLSLFLGLLMTLGKLYTESEITVMHACGLSKAVLVKAAMILAVFTAIVAAVNVMWAGPWSSRHQDEVLAEAKANPGMAALAQGQFQQATNGSSVLFIESVDGSDFKDVFLAQIRPKGNARPSVVVADSGHLTQLRDGSQVVTLNQGTRFEGTALLRDFRITDFQDYQAIIGHQAVALDPNDTDQMDMRTLWNTDTDRARAELNWRITLVFTVFMMALMVVPLSVVNPRQGRVLSMLPAMLLYLLFFLIQTSLKSNGGKGKLDPTLWMWTVNLIYLALAIVLNLWDTVPVRRLRASFSRKGAV</sequence>
<gene>
    <name type="primary">lptF</name>
    <name type="ordered locus">Z5873</name>
    <name type="ordered locus">ECs5238</name>
</gene>
<reference key="1">
    <citation type="journal article" date="2001" name="Nature">
        <title>Genome sequence of enterohaemorrhagic Escherichia coli O157:H7.</title>
        <authorList>
            <person name="Perna N.T."/>
            <person name="Plunkett G. III"/>
            <person name="Burland V."/>
            <person name="Mau B."/>
            <person name="Glasner J.D."/>
            <person name="Rose D.J."/>
            <person name="Mayhew G.F."/>
            <person name="Evans P.S."/>
            <person name="Gregor J."/>
            <person name="Kirkpatrick H.A."/>
            <person name="Posfai G."/>
            <person name="Hackett J."/>
            <person name="Klink S."/>
            <person name="Boutin A."/>
            <person name="Shao Y."/>
            <person name="Miller L."/>
            <person name="Grotbeck E.J."/>
            <person name="Davis N.W."/>
            <person name="Lim A."/>
            <person name="Dimalanta E.T."/>
            <person name="Potamousis K."/>
            <person name="Apodaca J."/>
            <person name="Anantharaman T.S."/>
            <person name="Lin J."/>
            <person name="Yen G."/>
            <person name="Schwartz D.C."/>
            <person name="Welch R.A."/>
            <person name="Blattner F.R."/>
        </authorList>
    </citation>
    <scope>NUCLEOTIDE SEQUENCE [LARGE SCALE GENOMIC DNA]</scope>
    <source>
        <strain>O157:H7 / EDL933 / ATCC 700927 / EHEC</strain>
    </source>
</reference>
<reference key="2">
    <citation type="journal article" date="2001" name="DNA Res.">
        <title>Complete genome sequence of enterohemorrhagic Escherichia coli O157:H7 and genomic comparison with a laboratory strain K-12.</title>
        <authorList>
            <person name="Hayashi T."/>
            <person name="Makino K."/>
            <person name="Ohnishi M."/>
            <person name="Kurokawa K."/>
            <person name="Ishii K."/>
            <person name="Yokoyama K."/>
            <person name="Han C.-G."/>
            <person name="Ohtsubo E."/>
            <person name="Nakayama K."/>
            <person name="Murata T."/>
            <person name="Tanaka M."/>
            <person name="Tobe T."/>
            <person name="Iida T."/>
            <person name="Takami H."/>
            <person name="Honda T."/>
            <person name="Sasakawa C."/>
            <person name="Ogasawara N."/>
            <person name="Yasunaga T."/>
            <person name="Kuhara S."/>
            <person name="Shiba T."/>
            <person name="Hattori M."/>
            <person name="Shinagawa H."/>
        </authorList>
    </citation>
    <scope>NUCLEOTIDE SEQUENCE [LARGE SCALE GENOMIC DNA]</scope>
    <source>
        <strain>O157:H7 / Sakai / RIMD 0509952 / EHEC</strain>
    </source>
</reference>
<name>LPTF_ECO57</name>
<comment type="function">
    <text evidence="1">Part of the ABC transporter complex LptBFG involved in the translocation of lipopolysaccharide (LPS) from the inner membrane to the outer membrane.</text>
</comment>
<comment type="subunit">
    <text evidence="1">Component of the lipopolysaccharide transport and assembly complex. The LptBFG transporter is composed of two ATP-binding proteins (LptB) and two transmembrane proteins (LptF and LptG) (By similarity).</text>
</comment>
<comment type="subcellular location">
    <subcellularLocation>
        <location evidence="1">Cell inner membrane</location>
        <topology evidence="1">Multi-pass membrane protein</topology>
    </subcellularLocation>
</comment>
<comment type="similarity">
    <text evidence="3">Belongs to the LptF/LptG family.</text>
</comment>
<keyword id="KW-0997">Cell inner membrane</keyword>
<keyword id="KW-1003">Cell membrane</keyword>
<keyword id="KW-0472">Membrane</keyword>
<keyword id="KW-1185">Reference proteome</keyword>
<keyword id="KW-0812">Transmembrane</keyword>
<keyword id="KW-1133">Transmembrane helix</keyword>
<keyword id="KW-0813">Transport</keyword>
<evidence type="ECO:0000250" key="1"/>
<evidence type="ECO:0000255" key="2"/>
<evidence type="ECO:0000305" key="3"/>
<protein>
    <recommendedName>
        <fullName>Lipopolysaccharide export system permease protein LptF</fullName>
    </recommendedName>
</protein>
<proteinExistence type="inferred from homology"/>
<feature type="chain" id="PRO_0000169772" description="Lipopolysaccharide export system permease protein LptF">
    <location>
        <begin position="1"/>
        <end position="366"/>
    </location>
</feature>
<feature type="topological domain" description="Cytoplasmic" evidence="2">
    <location>
        <begin position="1"/>
        <end position="15"/>
    </location>
</feature>
<feature type="transmembrane region" description="Helical" evidence="2">
    <location>
        <begin position="16"/>
        <end position="36"/>
    </location>
</feature>
<feature type="topological domain" description="Periplasmic" evidence="2">
    <location>
        <begin position="37"/>
        <end position="53"/>
    </location>
</feature>
<feature type="transmembrane region" description="Helical" evidence="2">
    <location>
        <begin position="54"/>
        <end position="74"/>
    </location>
</feature>
<feature type="topological domain" description="Cytoplasmic" evidence="2">
    <location>
        <begin position="75"/>
        <end position="100"/>
    </location>
</feature>
<feature type="transmembrane region" description="Helical" evidence="2">
    <location>
        <begin position="101"/>
        <end position="121"/>
    </location>
</feature>
<feature type="topological domain" description="Periplasmic" evidence="2">
    <location>
        <begin position="122"/>
        <end position="269"/>
    </location>
</feature>
<feature type="transmembrane region" description="Helical" evidence="2">
    <location>
        <begin position="270"/>
        <end position="290"/>
    </location>
</feature>
<feature type="topological domain" description="Cytoplasmic" evidence="2">
    <location>
        <begin position="291"/>
        <end position="295"/>
    </location>
</feature>
<feature type="transmembrane region" description="Helical" evidence="2">
    <location>
        <begin position="296"/>
        <end position="316"/>
    </location>
</feature>
<feature type="topological domain" description="Periplasmic" evidence="2">
    <location>
        <begin position="317"/>
        <end position="327"/>
    </location>
</feature>
<feature type="transmembrane region" description="Helical" evidence="2">
    <location>
        <begin position="328"/>
        <end position="348"/>
    </location>
</feature>
<feature type="topological domain" description="Cytoplasmic" evidence="2">
    <location>
        <begin position="349"/>
        <end position="366"/>
    </location>
</feature>
<dbReference type="EMBL" id="AE005174">
    <property type="protein sequence ID" value="AAG59460.1"/>
    <property type="molecule type" value="Genomic_DNA"/>
</dbReference>
<dbReference type="EMBL" id="BA000007">
    <property type="protein sequence ID" value="BAB38661.1"/>
    <property type="molecule type" value="Genomic_DNA"/>
</dbReference>
<dbReference type="PIR" id="F91283">
    <property type="entry name" value="F91283"/>
</dbReference>
<dbReference type="PIR" id="H86124">
    <property type="entry name" value="H86124"/>
</dbReference>
<dbReference type="RefSeq" id="NP_313265.1">
    <property type="nucleotide sequence ID" value="NC_002695.1"/>
</dbReference>
<dbReference type="RefSeq" id="WP_000584114.1">
    <property type="nucleotide sequence ID" value="NZ_VOAI01000023.1"/>
</dbReference>
<dbReference type="SMR" id="P0AFA0"/>
<dbReference type="STRING" id="155864.Z5873"/>
<dbReference type="GeneID" id="75203518"/>
<dbReference type="GeneID" id="913803"/>
<dbReference type="KEGG" id="ece:Z5873"/>
<dbReference type="KEGG" id="ecs:ECs_5238"/>
<dbReference type="PATRIC" id="fig|386585.9.peg.5476"/>
<dbReference type="eggNOG" id="COG0795">
    <property type="taxonomic scope" value="Bacteria"/>
</dbReference>
<dbReference type="HOGENOM" id="CLU_028799_0_2_6"/>
<dbReference type="OMA" id="NYISSMI"/>
<dbReference type="Proteomes" id="UP000000558">
    <property type="component" value="Chromosome"/>
</dbReference>
<dbReference type="Proteomes" id="UP000002519">
    <property type="component" value="Chromosome"/>
</dbReference>
<dbReference type="GO" id="GO:0043190">
    <property type="term" value="C:ATP-binding cassette (ABC) transporter complex"/>
    <property type="evidence" value="ECO:0007669"/>
    <property type="project" value="InterPro"/>
</dbReference>
<dbReference type="GO" id="GO:0015920">
    <property type="term" value="P:lipopolysaccharide transport"/>
    <property type="evidence" value="ECO:0007669"/>
    <property type="project" value="TreeGrafter"/>
</dbReference>
<dbReference type="GO" id="GO:0055085">
    <property type="term" value="P:transmembrane transport"/>
    <property type="evidence" value="ECO:0007669"/>
    <property type="project" value="InterPro"/>
</dbReference>
<dbReference type="InterPro" id="IPR030922">
    <property type="entry name" value="LptF"/>
</dbReference>
<dbReference type="InterPro" id="IPR005495">
    <property type="entry name" value="LptG/LptF_permease"/>
</dbReference>
<dbReference type="NCBIfam" id="TIGR04407">
    <property type="entry name" value="LptF_YjgP"/>
    <property type="match status" value="1"/>
</dbReference>
<dbReference type="PANTHER" id="PTHR33529:SF7">
    <property type="entry name" value="LIPOPOLYSACCHARIDE EXPORT SYSTEM PERMEASE PROTEIN LPTF"/>
    <property type="match status" value="1"/>
</dbReference>
<dbReference type="PANTHER" id="PTHR33529">
    <property type="entry name" value="SLR0882 PROTEIN-RELATED"/>
    <property type="match status" value="1"/>
</dbReference>
<dbReference type="Pfam" id="PF03739">
    <property type="entry name" value="LptF_LptG"/>
    <property type="match status" value="1"/>
</dbReference>